<dbReference type="EMBL" id="DP000010">
    <property type="protein sequence ID" value="ABA95505.1"/>
    <property type="molecule type" value="Genomic_DNA"/>
</dbReference>
<dbReference type="EMBL" id="AP008217">
    <property type="protein sequence ID" value="BAF28906.1"/>
    <property type="molecule type" value="Genomic_DNA"/>
</dbReference>
<dbReference type="EMBL" id="AP014967">
    <property type="protein sequence ID" value="BAT15398.1"/>
    <property type="molecule type" value="Genomic_DNA"/>
</dbReference>
<dbReference type="EMBL" id="AK105431">
    <property type="protein sequence ID" value="BAG97244.1"/>
    <property type="molecule type" value="mRNA"/>
</dbReference>
<dbReference type="RefSeq" id="XP_015615543.1">
    <property type="nucleotide sequence ID" value="XM_015760057.1"/>
</dbReference>
<dbReference type="SMR" id="Q2QZ37"/>
<dbReference type="FunCoup" id="Q2QZ37">
    <property type="interactions" value="1659"/>
</dbReference>
<dbReference type="STRING" id="39947.Q2QZ37"/>
<dbReference type="PaxDb" id="39947-Q2QZ37"/>
<dbReference type="EnsemblPlants" id="Os11t0704300-01">
    <property type="protein sequence ID" value="Os11t0704300-01"/>
    <property type="gene ID" value="Os11g0704300"/>
</dbReference>
<dbReference type="EnsemblPlants" id="Os11t0704300-02">
    <property type="protein sequence ID" value="Os11t0704300-02"/>
    <property type="gene ID" value="Os11g0704300"/>
</dbReference>
<dbReference type="Gramene" id="Os11t0704300-01">
    <property type="protein sequence ID" value="Os11t0704300-01"/>
    <property type="gene ID" value="Os11g0704300"/>
</dbReference>
<dbReference type="Gramene" id="Os11t0704300-02">
    <property type="protein sequence ID" value="Os11t0704300-02"/>
    <property type="gene ID" value="Os11g0704300"/>
</dbReference>
<dbReference type="KEGG" id="dosa:Os11g0704300"/>
<dbReference type="eggNOG" id="KOG1489">
    <property type="taxonomic scope" value="Eukaryota"/>
</dbReference>
<dbReference type="HOGENOM" id="CLU_011747_5_0_1"/>
<dbReference type="InParanoid" id="Q2QZ37"/>
<dbReference type="OMA" id="PRVGHWE"/>
<dbReference type="OrthoDB" id="347018at2759"/>
<dbReference type="Proteomes" id="UP000000763">
    <property type="component" value="Chromosome 11"/>
</dbReference>
<dbReference type="Proteomes" id="UP000059680">
    <property type="component" value="Chromosome 11"/>
</dbReference>
<dbReference type="GO" id="GO:0005739">
    <property type="term" value="C:mitochondrion"/>
    <property type="evidence" value="ECO:0000318"/>
    <property type="project" value="GO_Central"/>
</dbReference>
<dbReference type="GO" id="GO:0005525">
    <property type="term" value="F:GTP binding"/>
    <property type="evidence" value="ECO:0000318"/>
    <property type="project" value="GO_Central"/>
</dbReference>
<dbReference type="GO" id="GO:0003924">
    <property type="term" value="F:GTPase activity"/>
    <property type="evidence" value="ECO:0000318"/>
    <property type="project" value="GO_Central"/>
</dbReference>
<dbReference type="GO" id="GO:0000287">
    <property type="term" value="F:magnesium ion binding"/>
    <property type="evidence" value="ECO:0007669"/>
    <property type="project" value="InterPro"/>
</dbReference>
<dbReference type="CDD" id="cd01898">
    <property type="entry name" value="Obg"/>
    <property type="match status" value="1"/>
</dbReference>
<dbReference type="Gene3D" id="2.70.210.12">
    <property type="entry name" value="GTP1/OBG domain"/>
    <property type="match status" value="1"/>
</dbReference>
<dbReference type="Gene3D" id="3.40.50.300">
    <property type="entry name" value="P-loop containing nucleotide triphosphate hydrolases"/>
    <property type="match status" value="1"/>
</dbReference>
<dbReference type="InterPro" id="IPR031167">
    <property type="entry name" value="G_OBG"/>
</dbReference>
<dbReference type="InterPro" id="IPR006073">
    <property type="entry name" value="GTP-bd"/>
</dbReference>
<dbReference type="InterPro" id="IPR014100">
    <property type="entry name" value="GTP-bd_Obg/CgtA"/>
</dbReference>
<dbReference type="InterPro" id="IPR006169">
    <property type="entry name" value="GTP1_OBG_dom"/>
</dbReference>
<dbReference type="InterPro" id="IPR036726">
    <property type="entry name" value="GTP1_OBG_dom_sf"/>
</dbReference>
<dbReference type="InterPro" id="IPR045086">
    <property type="entry name" value="OBG_GTPase"/>
</dbReference>
<dbReference type="InterPro" id="IPR027417">
    <property type="entry name" value="P-loop_NTPase"/>
</dbReference>
<dbReference type="PANTHER" id="PTHR11702">
    <property type="entry name" value="DEVELOPMENTALLY REGULATED GTP-BINDING PROTEIN-RELATED"/>
    <property type="match status" value="1"/>
</dbReference>
<dbReference type="PANTHER" id="PTHR11702:SF31">
    <property type="entry name" value="MITOCHONDRIAL RIBOSOME-ASSOCIATED GTPASE 2"/>
    <property type="match status" value="1"/>
</dbReference>
<dbReference type="Pfam" id="PF01018">
    <property type="entry name" value="GTP1_OBG"/>
    <property type="match status" value="1"/>
</dbReference>
<dbReference type="Pfam" id="PF01926">
    <property type="entry name" value="MMR_HSR1"/>
    <property type="match status" value="1"/>
</dbReference>
<dbReference type="PIRSF" id="PIRSF002401">
    <property type="entry name" value="GTP_bd_Obg/CgtA"/>
    <property type="match status" value="1"/>
</dbReference>
<dbReference type="PRINTS" id="PR00326">
    <property type="entry name" value="GTP1OBG"/>
</dbReference>
<dbReference type="SUPFAM" id="SSF82051">
    <property type="entry name" value="Obg GTP-binding protein N-terminal domain"/>
    <property type="match status" value="1"/>
</dbReference>
<dbReference type="SUPFAM" id="SSF52540">
    <property type="entry name" value="P-loop containing nucleoside triphosphate hydrolases"/>
    <property type="match status" value="1"/>
</dbReference>
<dbReference type="PROSITE" id="PS51710">
    <property type="entry name" value="G_OBG"/>
    <property type="match status" value="1"/>
</dbReference>
<dbReference type="PROSITE" id="PS51883">
    <property type="entry name" value="OBG"/>
    <property type="match status" value="1"/>
</dbReference>
<name>OBGM_ORYSJ</name>
<reference key="1">
    <citation type="journal article" date="2005" name="BMC Biol.">
        <title>The sequence of rice chromosomes 11 and 12, rich in disease resistance genes and recent gene duplications.</title>
        <authorList>
            <consortium name="The rice chromosomes 11 and 12 sequencing consortia"/>
        </authorList>
    </citation>
    <scope>NUCLEOTIDE SEQUENCE [LARGE SCALE GENOMIC DNA]</scope>
    <source>
        <strain>cv. Nipponbare</strain>
    </source>
</reference>
<reference key="2">
    <citation type="journal article" date="2005" name="Nature">
        <title>The map-based sequence of the rice genome.</title>
        <authorList>
            <consortium name="International rice genome sequencing project (IRGSP)"/>
        </authorList>
    </citation>
    <scope>NUCLEOTIDE SEQUENCE [LARGE SCALE GENOMIC DNA]</scope>
    <source>
        <strain>cv. Nipponbare</strain>
    </source>
</reference>
<reference key="3">
    <citation type="journal article" date="2008" name="Nucleic Acids Res.">
        <title>The rice annotation project database (RAP-DB): 2008 update.</title>
        <authorList>
            <consortium name="The rice annotation project (RAP)"/>
        </authorList>
    </citation>
    <scope>GENOME REANNOTATION</scope>
    <source>
        <strain>cv. Nipponbare</strain>
    </source>
</reference>
<reference key="4">
    <citation type="journal article" date="2013" name="Rice">
        <title>Improvement of the Oryza sativa Nipponbare reference genome using next generation sequence and optical map data.</title>
        <authorList>
            <person name="Kawahara Y."/>
            <person name="de la Bastide M."/>
            <person name="Hamilton J.P."/>
            <person name="Kanamori H."/>
            <person name="McCombie W.R."/>
            <person name="Ouyang S."/>
            <person name="Schwartz D.C."/>
            <person name="Tanaka T."/>
            <person name="Wu J."/>
            <person name="Zhou S."/>
            <person name="Childs K.L."/>
            <person name="Davidson R.M."/>
            <person name="Lin H."/>
            <person name="Quesada-Ocampo L."/>
            <person name="Vaillancourt B."/>
            <person name="Sakai H."/>
            <person name="Lee S.S."/>
            <person name="Kim J."/>
            <person name="Numa H."/>
            <person name="Itoh T."/>
            <person name="Buell C.R."/>
            <person name="Matsumoto T."/>
        </authorList>
    </citation>
    <scope>GENOME REANNOTATION</scope>
    <source>
        <strain>cv. Nipponbare</strain>
    </source>
</reference>
<reference key="5">
    <citation type="journal article" date="2003" name="Science">
        <title>Collection, mapping, and annotation of over 28,000 cDNA clones from japonica rice.</title>
        <authorList>
            <consortium name="The rice full-length cDNA consortium"/>
        </authorList>
    </citation>
    <scope>NUCLEOTIDE SEQUENCE [LARGE SCALE MRNA]</scope>
    <source>
        <strain>cv. Nipponbare</strain>
    </source>
</reference>
<organism>
    <name type="scientific">Oryza sativa subsp. japonica</name>
    <name type="common">Rice</name>
    <dbReference type="NCBI Taxonomy" id="39947"/>
    <lineage>
        <taxon>Eukaryota</taxon>
        <taxon>Viridiplantae</taxon>
        <taxon>Streptophyta</taxon>
        <taxon>Embryophyta</taxon>
        <taxon>Tracheophyta</taxon>
        <taxon>Spermatophyta</taxon>
        <taxon>Magnoliopsida</taxon>
        <taxon>Liliopsida</taxon>
        <taxon>Poales</taxon>
        <taxon>Poaceae</taxon>
        <taxon>BOP clade</taxon>
        <taxon>Oryzoideae</taxon>
        <taxon>Oryzeae</taxon>
        <taxon>Oryzinae</taxon>
        <taxon>Oryza</taxon>
        <taxon>Oryza sativa</taxon>
    </lineage>
</organism>
<accession>Q2QZ37</accession>
<accession>A0A0P0Y5P1</accession>
<keyword id="KW-0342">GTP-binding</keyword>
<keyword id="KW-0496">Mitochondrion</keyword>
<keyword id="KW-0547">Nucleotide-binding</keyword>
<keyword id="KW-1185">Reference proteome</keyword>
<keyword id="KW-0809">Transit peptide</keyword>
<evidence type="ECO:0000250" key="1"/>
<evidence type="ECO:0000255" key="2"/>
<evidence type="ECO:0000255" key="3">
    <source>
        <dbReference type="PROSITE-ProRule" id="PRU01047"/>
    </source>
</evidence>
<evidence type="ECO:0000255" key="4">
    <source>
        <dbReference type="PROSITE-ProRule" id="PRU01231"/>
    </source>
</evidence>
<evidence type="ECO:0000256" key="5">
    <source>
        <dbReference type="SAM" id="MobiDB-lite"/>
    </source>
</evidence>
<evidence type="ECO:0000305" key="6"/>
<gene>
    <name type="primary">OBGM</name>
    <name type="ordered locus">Os11g0704300</name>
    <name type="ordered locus">LOC_Os11g47800</name>
</gene>
<sequence>MWRRQHALLRRISLPKPPAATGIGCYYATEPEGRKPKTAPLQSRGMVDRFRLRAKGGDGGNGCISLRRSRSDRQGKPDGGNGGRGGDVILECSRSVWDFSGLQHHMKASRGANGVSKNQIGTRGSDKIAQVPVGTVIHLVEGEQPSLSVNKPTRALDPWDIPDAVEHSPFSSSRIGSKMMKGLDSSRSSQHISSKKNTAENDCERGNRNHRGKEPYYMTEFVRTEDYDGTSYPHQVGVDENDQFDDEDDEFWEDDEEELDMEEVTEEKEEEEDVRYSVAEMTKPGQRLIIARGGEGGLGNACILKEMWLSKAHKEEEMASLSTGHPGTETYLILELKSIADVGLVGMPNAGKSTLLSALSRARPEIADYAFTTLRPNIGSLTYEDYFSVKVADIPGLIKGAHENRGLGHAFLRHIERTKVLAYVLDLAATLNGRKGVPPWEQLRDLVVELEHYQEGLTKRPSLIVANKIDEEGADEMYEELKKRVQGVPMFPICAILQEGVPDLRVGLRDLMDASDPQGIELSKIVVD</sequence>
<comment type="function">
    <text evidence="1">May bind GTP and have GTPase activity.</text>
</comment>
<comment type="subcellular location">
    <subcellularLocation>
        <location evidence="6">Mitochondrion</location>
    </subcellularLocation>
</comment>
<comment type="similarity">
    <text evidence="3">Belongs to the TRAFAC class OBG-HflX-like GTPase superfamily. OBG GTPase family.</text>
</comment>
<feature type="transit peptide" description="Mitochondrion" evidence="2">
    <location>
        <begin position="1"/>
        <end position="45"/>
    </location>
</feature>
<feature type="chain" id="PRO_0000424832" description="Probable GTP-binding protein OBGM, mitochondrial" evidence="2">
    <location>
        <begin position="46"/>
        <end position="528"/>
    </location>
</feature>
<feature type="domain" description="Obg" evidence="4">
    <location>
        <begin position="46"/>
        <end position="339"/>
    </location>
</feature>
<feature type="domain" description="OBG-type G" evidence="3">
    <location>
        <begin position="340"/>
        <end position="513"/>
    </location>
</feature>
<feature type="region of interest" description="Disordered" evidence="5">
    <location>
        <begin position="52"/>
        <end position="87"/>
    </location>
</feature>
<feature type="region of interest" description="Disordered" evidence="5">
    <location>
        <begin position="167"/>
        <end position="212"/>
    </location>
</feature>
<feature type="compositionally biased region" description="Gly residues" evidence="5">
    <location>
        <begin position="77"/>
        <end position="86"/>
    </location>
</feature>
<feature type="compositionally biased region" description="Basic and acidic residues" evidence="5">
    <location>
        <begin position="197"/>
        <end position="207"/>
    </location>
</feature>
<feature type="binding site" evidence="3">
    <location>
        <begin position="346"/>
        <end position="353"/>
    </location>
    <ligand>
        <name>GTP</name>
        <dbReference type="ChEBI" id="CHEBI:37565"/>
    </ligand>
</feature>
<feature type="binding site" evidence="3">
    <location>
        <begin position="393"/>
        <end position="397"/>
    </location>
    <ligand>
        <name>GTP</name>
        <dbReference type="ChEBI" id="CHEBI:37565"/>
    </ligand>
</feature>
<protein>
    <recommendedName>
        <fullName>Probable GTP-binding protein OBGM, mitochondrial</fullName>
    </recommendedName>
</protein>
<proteinExistence type="evidence at transcript level"/>